<protein>
    <recommendedName>
        <fullName>ABC transporter B family member 7</fullName>
        <shortName>ABC transporter ABCB.7</shortName>
        <shortName>AtABCB7</shortName>
    </recommendedName>
    <alternativeName>
        <fullName>Multidrug resistance protein 7</fullName>
    </alternativeName>
    <alternativeName>
        <fullName>P-glycoprotein 7</fullName>
    </alternativeName>
</protein>
<proteinExistence type="inferred from homology"/>
<evidence type="ECO:0000255" key="1"/>
<evidence type="ECO:0000255" key="2">
    <source>
        <dbReference type="PROSITE-ProRule" id="PRU00434"/>
    </source>
</evidence>
<evidence type="ECO:0000255" key="3">
    <source>
        <dbReference type="PROSITE-ProRule" id="PRU00441"/>
    </source>
</evidence>
<evidence type="ECO:0000305" key="4"/>
<gene>
    <name type="primary">ABCB7</name>
    <name type="synonym">MDR7</name>
    <name type="synonym">PGP7</name>
    <name type="ordered locus">At5g46540</name>
    <name type="ORF">K11I1.13</name>
</gene>
<feature type="chain" id="PRO_0000227918" description="ABC transporter B family member 7">
    <location>
        <begin position="1"/>
        <end position="1248"/>
    </location>
</feature>
<feature type="transmembrane region" description="Helical" evidence="3">
    <location>
        <begin position="32"/>
        <end position="52"/>
    </location>
</feature>
<feature type="transmembrane region" description="Helical" evidence="3">
    <location>
        <begin position="82"/>
        <end position="102"/>
    </location>
</feature>
<feature type="transmembrane region" description="Helical" evidence="3">
    <location>
        <begin position="158"/>
        <end position="175"/>
    </location>
</feature>
<feature type="transmembrane region" description="Helical" evidence="3">
    <location>
        <begin position="179"/>
        <end position="201"/>
    </location>
</feature>
<feature type="transmembrane region" description="Helical" evidence="3">
    <location>
        <begin position="261"/>
        <end position="281"/>
    </location>
</feature>
<feature type="transmembrane region" description="Helical" evidence="3">
    <location>
        <begin position="299"/>
        <end position="321"/>
    </location>
</feature>
<feature type="transmembrane region" description="Helical" evidence="3">
    <location>
        <begin position="682"/>
        <end position="702"/>
    </location>
</feature>
<feature type="transmembrane region" description="Helical" evidence="3">
    <location>
        <begin position="722"/>
        <end position="742"/>
    </location>
</feature>
<feature type="transmembrane region" description="Helical" evidence="3">
    <location>
        <begin position="813"/>
        <end position="833"/>
    </location>
</feature>
<feature type="transmembrane region" description="Helical" evidence="3">
    <location>
        <begin position="834"/>
        <end position="854"/>
    </location>
</feature>
<feature type="transmembrane region" description="Helical" evidence="3">
    <location>
        <begin position="914"/>
        <end position="934"/>
    </location>
</feature>
<feature type="transmembrane region" description="Helical" evidence="3">
    <location>
        <begin position="939"/>
        <end position="959"/>
    </location>
</feature>
<feature type="domain" description="ABC transmembrane type-1 1" evidence="3">
    <location>
        <begin position="35"/>
        <end position="322"/>
    </location>
</feature>
<feature type="domain" description="ABC transporter 1" evidence="2">
    <location>
        <begin position="357"/>
        <end position="593"/>
    </location>
</feature>
<feature type="domain" description="ABC transmembrane type-1 2" evidence="3">
    <location>
        <begin position="683"/>
        <end position="970"/>
    </location>
</feature>
<feature type="domain" description="ABC transporter 2" evidence="2">
    <location>
        <begin position="1005"/>
        <end position="1242"/>
    </location>
</feature>
<feature type="binding site" evidence="2">
    <location>
        <begin position="392"/>
        <end position="399"/>
    </location>
    <ligand>
        <name>ATP</name>
        <dbReference type="ChEBI" id="CHEBI:30616"/>
        <label>1</label>
    </ligand>
</feature>
<feature type="binding site" evidence="2">
    <location>
        <begin position="1040"/>
        <end position="1047"/>
    </location>
    <ligand>
        <name>ATP</name>
        <dbReference type="ChEBI" id="CHEBI:30616"/>
        <label>2</label>
    </ligand>
</feature>
<feature type="glycosylation site" description="N-linked (GlcNAc...) asparagine" evidence="1">
    <location>
        <position position="473"/>
    </location>
</feature>
<feature type="glycosylation site" description="N-linked (GlcNAc...) asparagine" evidence="1">
    <location>
        <position position="652"/>
    </location>
</feature>
<feature type="glycosylation site" description="N-linked (GlcNAc...) asparagine" evidence="1">
    <location>
        <position position="720"/>
    </location>
</feature>
<feature type="glycosylation site" description="N-linked (GlcNAc...) asparagine" evidence="1">
    <location>
        <position position="779"/>
    </location>
</feature>
<feature type="glycosylation site" description="N-linked (GlcNAc...) asparagine" evidence="1">
    <location>
        <position position="1094"/>
    </location>
</feature>
<feature type="glycosylation site" description="N-linked (GlcNAc...) asparagine" evidence="1">
    <location>
        <position position="1193"/>
    </location>
</feature>
<feature type="glycosylation site" description="N-linked (GlcNAc...) asparagine" evidence="1">
    <location>
        <position position="1244"/>
    </location>
</feature>
<sequence>MAEKAKKKKNGGGGNQRIAFYKLFTFADRYDIVLMVIGTLSAMANGLTQPFMSILMGQLINVFGFSDHDHVFKEVSKVAVKFLYLAAYAGVVSFLQVSCWMVTGERQSTRIRRLYLKTILRQDIGFFDTETNTGEVIGRMSGDTILIQDSMGEKVGKFTQLVSSFVGGFTVAFIVGMKLTLALLPCVPLIVGTGGAMTYIMSKKAQRVQLAYTEAGNVVQQAVGSIRTVVAFTGEKQSMGKYEKKLEIAYKSMVKQGLYSGLGIGIMMVVVYCTYGFAIWYGARQIIEKGYTGGQVMNVITSILTGGMALGQTLPSLNSFAAGTAAAYKMFETIKRKPKIDAYDMSGEVLEEIKGDIELRDVYFRYPARPDVQIFVGFSLTVPNGMTVALVGQSGSGKSTVISLIERFYDPESGEVLIDGIDLKKFQVKWIRSKIGLVSQEPILFATTIRENIVYGKKDASDQEIRTALKLANASNFIDKLPQGLETMVGEHGTQLSGGQKQRIAIARAILKNPKILLLDEATSALDAESERIVQDALVKLMLSRTTVVVAHRLTTIRTADMIAVVQQGKVIEKGTHDEMIKDPEGTYSQLVRLQEGSKKEEAIDKEPEKCEMSLEIESSDSQNGIHSGTLTSPSGLPGVISLDQTEEFHENISSTKTQTVKKGKEVSLRRLAHLNKPEISVLLLGSLAAVIHGIVFPVQGLLLSRTIRIFFEPSNKLKNDSLFWALIFVALGLTDLIVIPLQNYLFAIAGAKLIKRIRSLSFDRVLHQDISWFDDTKNSSGVIGARLSTDASTVKSIVGDVLGLIMQNMATIIGAFIIAFTANWLLALMALLVAPVMFFQGYYQIKFITGFGAKARGKYEEASQVASDAVSSIRTVASFCAEDKVMDLYQEKCDEPKQQGFKLGLVSGLCYGGSYLALYVIESVCFLGGSWLIQNRRATFGEFFQVFFALTLTAVGVTQTSTMAPDINKAKDSAASIFDILDSKPKIDSSSEKGTILPIVHGDIELQHVSFRYPMRPDIQIFSDLCLTISSGQTVALVGESGSGKSTVISLLERFYDPDSGKILLDQVEIQSLKLSWLREQMGLVSQEPVLFNETIGSNIAYGKIGGATEEEIITAAKAANVHNFISSLPQGYETSVGERGVQLSGGQKQRIAIARAILKDPKILLLDEATSALDAESERVVQDALDQVMVNRTTVVVAHLLTTIKDADMIAVVKNGVIAESGRHETLMEISGGAYASLVAFNMSAN</sequence>
<comment type="subcellular location">
    <subcellularLocation>
        <location evidence="3">Membrane</location>
        <topology evidence="3">Multi-pass membrane protein</topology>
    </subcellularLocation>
</comment>
<comment type="similarity">
    <text evidence="4">Belongs to the ABC transporter superfamily. ABCB family. Multidrug resistance exporter (TC 3.A.1.201) subfamily.</text>
</comment>
<keyword id="KW-0067">ATP-binding</keyword>
<keyword id="KW-0325">Glycoprotein</keyword>
<keyword id="KW-0472">Membrane</keyword>
<keyword id="KW-0547">Nucleotide-binding</keyword>
<keyword id="KW-1185">Reference proteome</keyword>
<keyword id="KW-0677">Repeat</keyword>
<keyword id="KW-0812">Transmembrane</keyword>
<keyword id="KW-1133">Transmembrane helix</keyword>
<keyword id="KW-0813">Transport</keyword>
<name>AB7B_ARATH</name>
<reference key="1">
    <citation type="journal article" date="2000" name="DNA Res.">
        <title>Structural analysis of Arabidopsis thaliana chromosome 5. X. Sequence features of the regions of 3,076,755 bp covered by sixty P1 and TAC clones.</title>
        <authorList>
            <person name="Sato S."/>
            <person name="Nakamura Y."/>
            <person name="Kaneko T."/>
            <person name="Katoh T."/>
            <person name="Asamizu E."/>
            <person name="Kotani H."/>
            <person name="Tabata S."/>
        </authorList>
    </citation>
    <scope>NUCLEOTIDE SEQUENCE [LARGE SCALE GENOMIC DNA]</scope>
    <source>
        <strain>cv. Columbia</strain>
    </source>
</reference>
<reference key="2">
    <citation type="submission" date="1999-06" db="EMBL/GenBank/DDBJ databases">
        <title>Structural analysis of Arabidopsis thaliana chromosome 5. XI.</title>
        <authorList>
            <person name="Kaneko T."/>
            <person name="Katoh T."/>
            <person name="Asamizu E."/>
            <person name="Sato S."/>
            <person name="Nakamura Y."/>
            <person name="Kotani H."/>
            <person name="Tabata S."/>
        </authorList>
    </citation>
    <scope>NUCLEOTIDE SEQUENCE [LARGE SCALE GENOMIC DNA]</scope>
    <source>
        <strain>cv. Columbia</strain>
    </source>
</reference>
<reference key="3">
    <citation type="journal article" date="2017" name="Plant J.">
        <title>Araport11: a complete reannotation of the Arabidopsis thaliana reference genome.</title>
        <authorList>
            <person name="Cheng C.Y."/>
            <person name="Krishnakumar V."/>
            <person name="Chan A.P."/>
            <person name="Thibaud-Nissen F."/>
            <person name="Schobel S."/>
            <person name="Town C.D."/>
        </authorList>
    </citation>
    <scope>GENOME REANNOTATION</scope>
    <source>
        <strain>cv. Columbia</strain>
    </source>
</reference>
<reference key="4">
    <citation type="journal article" date="2001" name="J. Biol. Chem.">
        <title>The Arabidopsis thaliana ABC protein superfamily, a complete inventory.</title>
        <authorList>
            <person name="Sanchez-Fernandez R."/>
            <person name="Davies T.G."/>
            <person name="Coleman J.O."/>
            <person name="Rea P.A."/>
        </authorList>
    </citation>
    <scope>GENE FAMILY</scope>
    <scope>NOMENCLATURE</scope>
</reference>
<reference key="5">
    <citation type="journal article" date="2008" name="Trends Plant Sci.">
        <title>Plant ABC proteins - a unified nomenclature and updated inventory.</title>
        <authorList>
            <person name="Verrier P.J."/>
            <person name="Bird D."/>
            <person name="Burla B."/>
            <person name="Dassa E."/>
            <person name="Forestier C."/>
            <person name="Geisler M."/>
            <person name="Klein M."/>
            <person name="Kolukisaoglu H.U."/>
            <person name="Lee Y."/>
            <person name="Martinoia E."/>
            <person name="Murphy A."/>
            <person name="Rea P.A."/>
            <person name="Samuels L."/>
            <person name="Schulz B."/>
            <person name="Spalding E.J."/>
            <person name="Yazaki K."/>
            <person name="Theodoulou F.L."/>
        </authorList>
    </citation>
    <scope>GENE FAMILY</scope>
    <scope>NOMENCLATURE</scope>
</reference>
<accession>Q9FHF1</accession>
<organism>
    <name type="scientific">Arabidopsis thaliana</name>
    <name type="common">Mouse-ear cress</name>
    <dbReference type="NCBI Taxonomy" id="3702"/>
    <lineage>
        <taxon>Eukaryota</taxon>
        <taxon>Viridiplantae</taxon>
        <taxon>Streptophyta</taxon>
        <taxon>Embryophyta</taxon>
        <taxon>Tracheophyta</taxon>
        <taxon>Spermatophyta</taxon>
        <taxon>Magnoliopsida</taxon>
        <taxon>eudicotyledons</taxon>
        <taxon>Gunneridae</taxon>
        <taxon>Pentapetalae</taxon>
        <taxon>rosids</taxon>
        <taxon>malvids</taxon>
        <taxon>Brassicales</taxon>
        <taxon>Brassicaceae</taxon>
        <taxon>Camelineae</taxon>
        <taxon>Arabidopsis</taxon>
    </lineage>
</organism>
<dbReference type="EMBL" id="AB019223">
    <property type="protein sequence ID" value="BAB10822.1"/>
    <property type="molecule type" value="Genomic_DNA"/>
</dbReference>
<dbReference type="EMBL" id="AB028605">
    <property type="protein sequence ID" value="BAB10822.1"/>
    <property type="status" value="JOINED"/>
    <property type="molecule type" value="Genomic_DNA"/>
</dbReference>
<dbReference type="EMBL" id="CP002688">
    <property type="protein sequence ID" value="AED95396.1"/>
    <property type="molecule type" value="Genomic_DNA"/>
</dbReference>
<dbReference type="RefSeq" id="NP_199466.1">
    <property type="nucleotide sequence ID" value="NM_124024.2"/>
</dbReference>
<dbReference type="SMR" id="Q9FHF1"/>
<dbReference type="FunCoup" id="Q9FHF1">
    <property type="interactions" value="255"/>
</dbReference>
<dbReference type="STRING" id="3702.Q9FHF1"/>
<dbReference type="GlyCosmos" id="Q9FHF1">
    <property type="glycosylation" value="7 sites, No reported glycans"/>
</dbReference>
<dbReference type="GlyGen" id="Q9FHF1">
    <property type="glycosylation" value="7 sites"/>
</dbReference>
<dbReference type="iPTMnet" id="Q9FHF1"/>
<dbReference type="PaxDb" id="3702-AT5G46540.1"/>
<dbReference type="ProteomicsDB" id="244615"/>
<dbReference type="EnsemblPlants" id="AT5G46540.1">
    <property type="protein sequence ID" value="AT5G46540.1"/>
    <property type="gene ID" value="AT5G46540"/>
</dbReference>
<dbReference type="GeneID" id="834697"/>
<dbReference type="Gramene" id="AT5G46540.1">
    <property type="protein sequence ID" value="AT5G46540.1"/>
    <property type="gene ID" value="AT5G46540"/>
</dbReference>
<dbReference type="KEGG" id="ath:AT5G46540"/>
<dbReference type="Araport" id="AT5G46540"/>
<dbReference type="TAIR" id="AT5G46540">
    <property type="gene designation" value="ABCB7"/>
</dbReference>
<dbReference type="eggNOG" id="KOG0055">
    <property type="taxonomic scope" value="Eukaryota"/>
</dbReference>
<dbReference type="HOGENOM" id="CLU_000604_17_2_1"/>
<dbReference type="InParanoid" id="Q9FHF1"/>
<dbReference type="OMA" id="IMSGAMA"/>
<dbReference type="PhylomeDB" id="Q9FHF1"/>
<dbReference type="BioCyc" id="ARA:AT5G46540-MONOMER"/>
<dbReference type="PRO" id="PR:Q9FHF1"/>
<dbReference type="Proteomes" id="UP000006548">
    <property type="component" value="Chromosome 5"/>
</dbReference>
<dbReference type="ExpressionAtlas" id="Q9FHF1">
    <property type="expression patterns" value="baseline and differential"/>
</dbReference>
<dbReference type="GO" id="GO:0005886">
    <property type="term" value="C:plasma membrane"/>
    <property type="evidence" value="ECO:0007005"/>
    <property type="project" value="TAIR"/>
</dbReference>
<dbReference type="GO" id="GO:0009536">
    <property type="term" value="C:plastid"/>
    <property type="evidence" value="ECO:0007005"/>
    <property type="project" value="TAIR"/>
</dbReference>
<dbReference type="GO" id="GO:0140359">
    <property type="term" value="F:ABC-type transporter activity"/>
    <property type="evidence" value="ECO:0007669"/>
    <property type="project" value="InterPro"/>
</dbReference>
<dbReference type="GO" id="GO:0005524">
    <property type="term" value="F:ATP binding"/>
    <property type="evidence" value="ECO:0007669"/>
    <property type="project" value="UniProtKB-KW"/>
</dbReference>
<dbReference type="GO" id="GO:0016887">
    <property type="term" value="F:ATP hydrolysis activity"/>
    <property type="evidence" value="ECO:0007669"/>
    <property type="project" value="InterPro"/>
</dbReference>
<dbReference type="CDD" id="cd18577">
    <property type="entry name" value="ABC_6TM_Pgp_ABCB1_D1_like"/>
    <property type="match status" value="1"/>
</dbReference>
<dbReference type="CDD" id="cd18578">
    <property type="entry name" value="ABC_6TM_Pgp_ABCB1_D2_like"/>
    <property type="match status" value="1"/>
</dbReference>
<dbReference type="CDD" id="cd03249">
    <property type="entry name" value="ABC_MTABC3_MDL1_MDL2"/>
    <property type="match status" value="2"/>
</dbReference>
<dbReference type="FunFam" id="1.20.1560.10:FF:000009">
    <property type="entry name" value="ABC transporter B family member 1"/>
    <property type="match status" value="1"/>
</dbReference>
<dbReference type="FunFam" id="3.40.50.300:FF:000066">
    <property type="entry name" value="ABC transporter B family member 1"/>
    <property type="match status" value="2"/>
</dbReference>
<dbReference type="FunFam" id="1.20.1560.10:FF:000044">
    <property type="entry name" value="ABC transporter B family member 9"/>
    <property type="match status" value="1"/>
</dbReference>
<dbReference type="Gene3D" id="1.20.1560.10">
    <property type="entry name" value="ABC transporter type 1, transmembrane domain"/>
    <property type="match status" value="3"/>
</dbReference>
<dbReference type="Gene3D" id="3.40.50.300">
    <property type="entry name" value="P-loop containing nucleotide triphosphate hydrolases"/>
    <property type="match status" value="2"/>
</dbReference>
<dbReference type="InterPro" id="IPR003593">
    <property type="entry name" value="AAA+_ATPase"/>
</dbReference>
<dbReference type="InterPro" id="IPR011527">
    <property type="entry name" value="ABC1_TM_dom"/>
</dbReference>
<dbReference type="InterPro" id="IPR036640">
    <property type="entry name" value="ABC1_TM_sf"/>
</dbReference>
<dbReference type="InterPro" id="IPR003439">
    <property type="entry name" value="ABC_transporter-like_ATP-bd"/>
</dbReference>
<dbReference type="InterPro" id="IPR017871">
    <property type="entry name" value="ABC_transporter-like_CS"/>
</dbReference>
<dbReference type="InterPro" id="IPR027417">
    <property type="entry name" value="P-loop_NTPase"/>
</dbReference>
<dbReference type="InterPro" id="IPR039421">
    <property type="entry name" value="Type_1_exporter"/>
</dbReference>
<dbReference type="PANTHER" id="PTHR24222">
    <property type="entry name" value="ABC TRANSPORTER B FAMILY"/>
    <property type="match status" value="1"/>
</dbReference>
<dbReference type="PANTHER" id="PTHR24222:SF50">
    <property type="entry name" value="ABC TRANSPORTER B FAMILY MEMBER 9-LIKE ISOFORM X2"/>
    <property type="match status" value="1"/>
</dbReference>
<dbReference type="Pfam" id="PF00664">
    <property type="entry name" value="ABC_membrane"/>
    <property type="match status" value="2"/>
</dbReference>
<dbReference type="Pfam" id="PF00005">
    <property type="entry name" value="ABC_tran"/>
    <property type="match status" value="2"/>
</dbReference>
<dbReference type="SMART" id="SM00382">
    <property type="entry name" value="AAA"/>
    <property type="match status" value="2"/>
</dbReference>
<dbReference type="SUPFAM" id="SSF90123">
    <property type="entry name" value="ABC transporter transmembrane region"/>
    <property type="match status" value="2"/>
</dbReference>
<dbReference type="SUPFAM" id="SSF52540">
    <property type="entry name" value="P-loop containing nucleoside triphosphate hydrolases"/>
    <property type="match status" value="2"/>
</dbReference>
<dbReference type="PROSITE" id="PS50929">
    <property type="entry name" value="ABC_TM1F"/>
    <property type="match status" value="2"/>
</dbReference>
<dbReference type="PROSITE" id="PS00211">
    <property type="entry name" value="ABC_TRANSPORTER_1"/>
    <property type="match status" value="2"/>
</dbReference>
<dbReference type="PROSITE" id="PS50893">
    <property type="entry name" value="ABC_TRANSPORTER_2"/>
    <property type="match status" value="2"/>
</dbReference>